<gene>
    <name evidence="1" type="primary">rplP</name>
    <name type="ordered locus">VP0264</name>
</gene>
<dbReference type="EMBL" id="BA000031">
    <property type="protein sequence ID" value="BAC58527.1"/>
    <property type="molecule type" value="Genomic_DNA"/>
</dbReference>
<dbReference type="RefSeq" id="NP_796643.1">
    <property type="nucleotide sequence ID" value="NC_004603.1"/>
</dbReference>
<dbReference type="RefSeq" id="WP_005379577.1">
    <property type="nucleotide sequence ID" value="NC_004603.1"/>
</dbReference>
<dbReference type="SMR" id="Q87T06"/>
<dbReference type="GeneID" id="83583116"/>
<dbReference type="KEGG" id="vpa:VP0264"/>
<dbReference type="PATRIC" id="fig|223926.6.peg.255"/>
<dbReference type="eggNOG" id="COG0197">
    <property type="taxonomic scope" value="Bacteria"/>
</dbReference>
<dbReference type="HOGENOM" id="CLU_078858_2_1_6"/>
<dbReference type="PRO" id="PR:Q87T06"/>
<dbReference type="Proteomes" id="UP000002493">
    <property type="component" value="Chromosome 1"/>
</dbReference>
<dbReference type="GO" id="GO:0022625">
    <property type="term" value="C:cytosolic large ribosomal subunit"/>
    <property type="evidence" value="ECO:0007669"/>
    <property type="project" value="TreeGrafter"/>
</dbReference>
<dbReference type="GO" id="GO:0019843">
    <property type="term" value="F:rRNA binding"/>
    <property type="evidence" value="ECO:0007669"/>
    <property type="project" value="UniProtKB-UniRule"/>
</dbReference>
<dbReference type="GO" id="GO:0003735">
    <property type="term" value="F:structural constituent of ribosome"/>
    <property type="evidence" value="ECO:0007669"/>
    <property type="project" value="InterPro"/>
</dbReference>
<dbReference type="GO" id="GO:0000049">
    <property type="term" value="F:tRNA binding"/>
    <property type="evidence" value="ECO:0007669"/>
    <property type="project" value="UniProtKB-KW"/>
</dbReference>
<dbReference type="GO" id="GO:0006412">
    <property type="term" value="P:translation"/>
    <property type="evidence" value="ECO:0007669"/>
    <property type="project" value="UniProtKB-UniRule"/>
</dbReference>
<dbReference type="CDD" id="cd01433">
    <property type="entry name" value="Ribosomal_L16_L10e"/>
    <property type="match status" value="1"/>
</dbReference>
<dbReference type="FunFam" id="3.90.1170.10:FF:000001">
    <property type="entry name" value="50S ribosomal protein L16"/>
    <property type="match status" value="1"/>
</dbReference>
<dbReference type="Gene3D" id="3.90.1170.10">
    <property type="entry name" value="Ribosomal protein L10e/L16"/>
    <property type="match status" value="1"/>
</dbReference>
<dbReference type="HAMAP" id="MF_01342">
    <property type="entry name" value="Ribosomal_uL16"/>
    <property type="match status" value="1"/>
</dbReference>
<dbReference type="InterPro" id="IPR047873">
    <property type="entry name" value="Ribosomal_uL16"/>
</dbReference>
<dbReference type="InterPro" id="IPR000114">
    <property type="entry name" value="Ribosomal_uL16_bact-type"/>
</dbReference>
<dbReference type="InterPro" id="IPR020798">
    <property type="entry name" value="Ribosomal_uL16_CS"/>
</dbReference>
<dbReference type="InterPro" id="IPR016180">
    <property type="entry name" value="Ribosomal_uL16_dom"/>
</dbReference>
<dbReference type="InterPro" id="IPR036920">
    <property type="entry name" value="Ribosomal_uL16_sf"/>
</dbReference>
<dbReference type="NCBIfam" id="TIGR01164">
    <property type="entry name" value="rplP_bact"/>
    <property type="match status" value="1"/>
</dbReference>
<dbReference type="PANTHER" id="PTHR12220">
    <property type="entry name" value="50S/60S RIBOSOMAL PROTEIN L16"/>
    <property type="match status" value="1"/>
</dbReference>
<dbReference type="PANTHER" id="PTHR12220:SF13">
    <property type="entry name" value="LARGE RIBOSOMAL SUBUNIT PROTEIN UL16M"/>
    <property type="match status" value="1"/>
</dbReference>
<dbReference type="Pfam" id="PF00252">
    <property type="entry name" value="Ribosomal_L16"/>
    <property type="match status" value="1"/>
</dbReference>
<dbReference type="PRINTS" id="PR00060">
    <property type="entry name" value="RIBOSOMALL16"/>
</dbReference>
<dbReference type="SUPFAM" id="SSF54686">
    <property type="entry name" value="Ribosomal protein L16p/L10e"/>
    <property type="match status" value="1"/>
</dbReference>
<dbReference type="PROSITE" id="PS00586">
    <property type="entry name" value="RIBOSOMAL_L16_1"/>
    <property type="match status" value="1"/>
</dbReference>
<evidence type="ECO:0000255" key="1">
    <source>
        <dbReference type="HAMAP-Rule" id="MF_01342"/>
    </source>
</evidence>
<evidence type="ECO:0000305" key="2"/>
<name>RL16_VIBPA</name>
<comment type="function">
    <text evidence="1">Binds 23S rRNA and is also seen to make contacts with the A and possibly P site tRNAs.</text>
</comment>
<comment type="subunit">
    <text evidence="1">Part of the 50S ribosomal subunit.</text>
</comment>
<comment type="similarity">
    <text evidence="1">Belongs to the universal ribosomal protein uL16 family.</text>
</comment>
<protein>
    <recommendedName>
        <fullName evidence="1">Large ribosomal subunit protein uL16</fullName>
    </recommendedName>
    <alternativeName>
        <fullName evidence="2">50S ribosomal protein L16</fullName>
    </alternativeName>
</protein>
<reference key="1">
    <citation type="journal article" date="2003" name="Lancet">
        <title>Genome sequence of Vibrio parahaemolyticus: a pathogenic mechanism distinct from that of V. cholerae.</title>
        <authorList>
            <person name="Makino K."/>
            <person name="Oshima K."/>
            <person name="Kurokawa K."/>
            <person name="Yokoyama K."/>
            <person name="Uda T."/>
            <person name="Tagomori K."/>
            <person name="Iijima Y."/>
            <person name="Najima M."/>
            <person name="Nakano M."/>
            <person name="Yamashita A."/>
            <person name="Kubota Y."/>
            <person name="Kimura S."/>
            <person name="Yasunaga T."/>
            <person name="Honda T."/>
            <person name="Shinagawa H."/>
            <person name="Hattori M."/>
            <person name="Iida T."/>
        </authorList>
    </citation>
    <scope>NUCLEOTIDE SEQUENCE [LARGE SCALE GENOMIC DNA]</scope>
    <source>
        <strain>RIMD 2210633</strain>
    </source>
</reference>
<organism>
    <name type="scientific">Vibrio parahaemolyticus serotype O3:K6 (strain RIMD 2210633)</name>
    <dbReference type="NCBI Taxonomy" id="223926"/>
    <lineage>
        <taxon>Bacteria</taxon>
        <taxon>Pseudomonadati</taxon>
        <taxon>Pseudomonadota</taxon>
        <taxon>Gammaproteobacteria</taxon>
        <taxon>Vibrionales</taxon>
        <taxon>Vibrionaceae</taxon>
        <taxon>Vibrio</taxon>
    </lineage>
</organism>
<sequence length="136" mass="15525">MLQPKRTKFRKVQTGRNRGLAKGTDVSFGEFGLKAVGRGRLTARQIEAARRAMTRHVKRQGKIWIRVFPDKPITEKPLEVRQGKGKGNVEYWVAQIQPGKVMYEMGGVPEELAREAFRLAARKLPFKTTFVTKQVM</sequence>
<keyword id="KW-0687">Ribonucleoprotein</keyword>
<keyword id="KW-0689">Ribosomal protein</keyword>
<keyword id="KW-0694">RNA-binding</keyword>
<keyword id="KW-0699">rRNA-binding</keyword>
<keyword id="KW-0820">tRNA-binding</keyword>
<feature type="chain" id="PRO_0000062246" description="Large ribosomal subunit protein uL16">
    <location>
        <begin position="1"/>
        <end position="136"/>
    </location>
</feature>
<accession>Q87T06</accession>
<proteinExistence type="inferred from homology"/>